<keyword id="KW-0064">Aspartyl protease</keyword>
<keyword id="KW-0175">Coiled coil</keyword>
<keyword id="KW-0229">DNA integration</keyword>
<keyword id="KW-0233">DNA recombination</keyword>
<keyword id="KW-0238">DNA-binding</keyword>
<keyword id="KW-0239">DNA-directed DNA polymerase</keyword>
<keyword id="KW-0255">Endonuclease</keyword>
<keyword id="KW-0378">Hydrolase</keyword>
<keyword id="KW-0449">Lipoprotein</keyword>
<keyword id="KW-0460">Magnesium</keyword>
<keyword id="KW-0479">Metal-binding</keyword>
<keyword id="KW-0511">Multifunctional enzyme</keyword>
<keyword id="KW-0519">Myristate</keyword>
<keyword id="KW-0540">Nuclease</keyword>
<keyword id="KW-0548">Nucleotidyltransferase</keyword>
<keyword id="KW-0645">Protease</keyword>
<keyword id="KW-0677">Repeat</keyword>
<keyword id="KW-0688">Ribosomal frameshifting</keyword>
<keyword id="KW-0694">RNA-binding</keyword>
<keyword id="KW-0695">RNA-directed DNA polymerase</keyword>
<keyword id="KW-0808">Transferase</keyword>
<keyword id="KW-1179">Viral genome integration</keyword>
<keyword id="KW-0468">Viral matrix protein</keyword>
<keyword id="KW-0543">Viral nucleoprotein</keyword>
<keyword id="KW-0946">Virion</keyword>
<keyword id="KW-1160">Virus entry into host cell</keyword>
<keyword id="KW-0862">Zinc</keyword>
<keyword id="KW-0863">Zinc-finger</keyword>
<organismHost>
    <name type="scientific">Macaca mulatta</name>
    <name type="common">Rhesus macaque</name>
    <dbReference type="NCBI Taxonomy" id="9544"/>
</organismHost>
<sequence length="1772" mass="198230">MGQELSQHERYVEQLKQALKTRGVKVKYADLLKFFDFVKDTCPWFPQEGTIDIKRWRRVGDCFQDYYNTFGPEKVPVTAFSYWNLIKELIDKKEVNPQVMAAVAQTEEILKTSSHTELTTKPSQNPDLDLISLDSDDEGAKGSSLKDKNLSCTKKPKRFPVLLTAQTSADPEDPNPSEVDWDGLEDEAAKYHNPDWPPFLTRPPPYNKATPSAPTVMAVVNPKEELKEKIAQLEEQIKLEELHQALISKLQKLKTGNETVTSPETAGGFSRTPHWPGQHIPKGKCCASREKEEQTPKDIFPVTETVDGQGQAWRHHNGFDFTVIKELKTAASQYGATAPYTLAIVESVADNWLTPTDWNTLVRAVLSGGDHLLWKSEFFENCRETAKRNQQAGNGWDFDMLTGSGNYSSTDAQMQYDPGLFAQIQAAATKAWRKLPVKGDPGASLTGVKQGPDEPFADFVHRLITTAGRIFGSAEAGVDYVKQLAYENANPACQAAIRPYRKKTDLTGYIRLCSDIGPSYQQGLAMAAAFSGQTVKDFLNNKNKEKGGCCFKCGRKGHFAKNCHEHIHNNSETKAPGLCPRCKRGKHWANECKSKTDSQGNPLPPHQGNRTEGPAPGPETSLWGGQLCSSQQKQPISKLTRATPGSAGLDLSSTSHTVLTPEMGPQALSTGIYGPLPPNTFGLILGRSSITIKGLQVYPGVIDNDYTGEIKIMAKAVNNIVTVPQGNRIAQLILLPLIETDNKVQQPYRGQGSFGSSDIYWVQPITCQKPSLTLWLDDKMFTGLIDTGADVTIIKLEDWPPNWPITDTLTNLRGIGQSNNPKQSSKYLTWRDKENNSGLIKPFVIPNLPVNLWGRDLLSQMKIMMCSPSDIVTAQMLAQGYSPGKGLGKNENGILHPIPNQGQFDKKGFGNFLTAAIDMLAPQQCAEPITWKSDEPVWVDQWPLTSEKLAAAQQLVQEQLEAGHITESNSPWNTPIFVIKKKSGKWRLLQDLRAVNATMVLMGALQPGLPSPVAIPQGYLKIIIDLKDCFFSIPLHPSDQKRFAFSLPSTNFKEPMQRFQWKVLPQRMANSPTLCQKYVATAIHKVRHAWKQMYIIHYMDDILIAGKDGQQVLQCFDQLKQELTIAGLHIAPEKIQLQDPYTYLGFELNGPKITNQKAVIRKDKLQTLNDFQKLLGDINWLRPYLKLTTADLKPLFDTLKGDSNPNSHRSLSKEALALLDKVETAIAEQFVTHINYSLPLMFLIFNTALTPTGLFWQNNPIMWVHLPASPKKVLLPYYDAIADLIILGRDHSKKYFGIEPSVIIQPYSKSQIDWLMQNTEMWPIACASYVGILDNHYPPNKLIQFCKLHAFIFPQIISKTPLNNALLVFTDGSSTGMAAYTLADTTIKFQTNLNSAQLVELQALIAVLSAFPNQPLNIYTDSAYLAHSIPLLETVAQIKHISETAKLFLQCQQLIYNRSIPFYIGHVRAHSGLPGPIAHGNQKADLATKTVASNINTNLESAQNAHTLHHLNAQTLKLMFNIPREQARQIVRQCPICATYLPVPHLGVNPRGLLPNMIWQMDVTHYSEFGNLKYIHVSIDTFSGFLLATLQTGETTKHVITHLLHCFSIIGLPKQIKTDNGPGYTSKNFQEFCSTLQIKHVTGIPYNPQGQGIVERAHLSLKTTIEKIKKGEWYPTKGTPRNILNHALFILNFLNLDDQNHSAADRFWHSNPRKQFAMVKWKDPLDNTWPWPDPVIIWGRGSVCVYSQTHDAARWLPERLVKQIPNNNQSRE</sequence>
<dbReference type="EC" id="3.6.1.23" evidence="7"/>
<dbReference type="EC" id="3.4.23.-" evidence="11"/>
<dbReference type="EC" id="2.7.7.49" evidence="12"/>
<dbReference type="EC" id="2.7.7.7" evidence="12"/>
<dbReference type="EC" id="3.1.26.4" evidence="13"/>
<dbReference type="EC" id="2.7.7.-" evidence="7"/>
<dbReference type="EC" id="3.1.-.-" evidence="7"/>
<dbReference type="EMBL" id="M11841">
    <property type="protein sequence ID" value="AAA47732.1"/>
    <property type="molecule type" value="Genomic_RNA"/>
</dbReference>
<dbReference type="SMR" id="P04025"/>
<dbReference type="Proteomes" id="UP000007228">
    <property type="component" value="Genome"/>
</dbReference>
<dbReference type="GO" id="GO:0019013">
    <property type="term" value="C:viral nucleocapsid"/>
    <property type="evidence" value="ECO:0007669"/>
    <property type="project" value="UniProtKB-KW"/>
</dbReference>
<dbReference type="GO" id="GO:0004190">
    <property type="term" value="F:aspartic-type endopeptidase activity"/>
    <property type="evidence" value="ECO:0007669"/>
    <property type="project" value="UniProtKB-KW"/>
</dbReference>
<dbReference type="GO" id="GO:0003677">
    <property type="term" value="F:DNA binding"/>
    <property type="evidence" value="ECO:0007669"/>
    <property type="project" value="UniProtKB-KW"/>
</dbReference>
<dbReference type="GO" id="GO:0003887">
    <property type="term" value="F:DNA-directed DNA polymerase activity"/>
    <property type="evidence" value="ECO:0007669"/>
    <property type="project" value="UniProtKB-KW"/>
</dbReference>
<dbReference type="GO" id="GO:0004170">
    <property type="term" value="F:dUTP diphosphatase activity"/>
    <property type="evidence" value="ECO:0007669"/>
    <property type="project" value="UniProtKB-EC"/>
</dbReference>
<dbReference type="GO" id="GO:0035613">
    <property type="term" value="F:RNA stem-loop binding"/>
    <property type="evidence" value="ECO:0007669"/>
    <property type="project" value="TreeGrafter"/>
</dbReference>
<dbReference type="GO" id="GO:0003964">
    <property type="term" value="F:RNA-directed DNA polymerase activity"/>
    <property type="evidence" value="ECO:0007669"/>
    <property type="project" value="UniProtKB-KW"/>
</dbReference>
<dbReference type="GO" id="GO:0004523">
    <property type="term" value="F:RNA-DNA hybrid ribonuclease activity"/>
    <property type="evidence" value="ECO:0007669"/>
    <property type="project" value="UniProtKB-EC"/>
</dbReference>
<dbReference type="GO" id="GO:0039660">
    <property type="term" value="F:structural constituent of virion"/>
    <property type="evidence" value="ECO:0007669"/>
    <property type="project" value="UniProtKB-KW"/>
</dbReference>
<dbReference type="GO" id="GO:0008270">
    <property type="term" value="F:zinc ion binding"/>
    <property type="evidence" value="ECO:0007669"/>
    <property type="project" value="UniProtKB-KW"/>
</dbReference>
<dbReference type="GO" id="GO:0015074">
    <property type="term" value="P:DNA integration"/>
    <property type="evidence" value="ECO:0007669"/>
    <property type="project" value="UniProtKB-KW"/>
</dbReference>
<dbReference type="GO" id="GO:0006310">
    <property type="term" value="P:DNA recombination"/>
    <property type="evidence" value="ECO:0007669"/>
    <property type="project" value="UniProtKB-KW"/>
</dbReference>
<dbReference type="GO" id="GO:0075713">
    <property type="term" value="P:establishment of integrated proviral latency"/>
    <property type="evidence" value="ECO:0007669"/>
    <property type="project" value="UniProtKB-KW"/>
</dbReference>
<dbReference type="GO" id="GO:0006508">
    <property type="term" value="P:proteolysis"/>
    <property type="evidence" value="ECO:0007669"/>
    <property type="project" value="UniProtKB-KW"/>
</dbReference>
<dbReference type="GO" id="GO:0046718">
    <property type="term" value="P:symbiont entry into host cell"/>
    <property type="evidence" value="ECO:0007669"/>
    <property type="project" value="UniProtKB-KW"/>
</dbReference>
<dbReference type="GO" id="GO:0044826">
    <property type="term" value="P:viral genome integration into host DNA"/>
    <property type="evidence" value="ECO:0007669"/>
    <property type="project" value="UniProtKB-KW"/>
</dbReference>
<dbReference type="GO" id="GO:0075523">
    <property type="term" value="P:viral translational frameshifting"/>
    <property type="evidence" value="ECO:0007669"/>
    <property type="project" value="UniProtKB-KW"/>
</dbReference>
<dbReference type="CDD" id="cd05482">
    <property type="entry name" value="HIV_retropepsin_like"/>
    <property type="match status" value="1"/>
</dbReference>
<dbReference type="CDD" id="cd09273">
    <property type="entry name" value="RNase_HI_RT_Bel"/>
    <property type="match status" value="1"/>
</dbReference>
<dbReference type="CDD" id="cd01645">
    <property type="entry name" value="RT_Rtv"/>
    <property type="match status" value="1"/>
</dbReference>
<dbReference type="CDD" id="cd07557">
    <property type="entry name" value="trimeric_dUTPase"/>
    <property type="match status" value="1"/>
</dbReference>
<dbReference type="FunFam" id="1.10.150.490:FF:000002">
    <property type="entry name" value="Gag polyprotein"/>
    <property type="match status" value="1"/>
</dbReference>
<dbReference type="FunFam" id="4.10.60.10:FF:000036">
    <property type="entry name" value="Gag polyprotein"/>
    <property type="match status" value="1"/>
</dbReference>
<dbReference type="Gene3D" id="1.10.10.200">
    <property type="match status" value="1"/>
</dbReference>
<dbReference type="Gene3D" id="1.10.1200.30">
    <property type="match status" value="1"/>
</dbReference>
<dbReference type="Gene3D" id="2.70.40.10">
    <property type="match status" value="1"/>
</dbReference>
<dbReference type="Gene3D" id="3.30.70.270">
    <property type="match status" value="2"/>
</dbReference>
<dbReference type="Gene3D" id="2.40.70.10">
    <property type="entry name" value="Acid Proteases"/>
    <property type="match status" value="1"/>
</dbReference>
<dbReference type="Gene3D" id="3.10.10.10">
    <property type="entry name" value="HIV Type 1 Reverse Transcriptase, subunit A, domain 1"/>
    <property type="match status" value="1"/>
</dbReference>
<dbReference type="Gene3D" id="1.10.375.10">
    <property type="entry name" value="Human Immunodeficiency Virus Type 1 Capsid Protein"/>
    <property type="match status" value="1"/>
</dbReference>
<dbReference type="Gene3D" id="2.30.30.10">
    <property type="entry name" value="Integrase, C-terminal domain superfamily, retroviral"/>
    <property type="match status" value="1"/>
</dbReference>
<dbReference type="Gene3D" id="1.10.150.490">
    <property type="entry name" value="Retroviral GAG p10 protein"/>
    <property type="match status" value="1"/>
</dbReference>
<dbReference type="Gene3D" id="3.30.420.10">
    <property type="entry name" value="Ribonuclease H-like superfamily/Ribonuclease H"/>
    <property type="match status" value="2"/>
</dbReference>
<dbReference type="Gene3D" id="4.10.60.10">
    <property type="entry name" value="Zinc finger, CCHC-type"/>
    <property type="match status" value="1"/>
</dbReference>
<dbReference type="InterPro" id="IPR001969">
    <property type="entry name" value="Aspartic_peptidase_AS"/>
</dbReference>
<dbReference type="InterPro" id="IPR003322">
    <property type="entry name" value="B_retro_matrix"/>
</dbReference>
<dbReference type="InterPro" id="IPR038124">
    <property type="entry name" value="B_retro_matrix_sf"/>
</dbReference>
<dbReference type="InterPro" id="IPR043502">
    <property type="entry name" value="DNA/RNA_pol_sf"/>
</dbReference>
<dbReference type="InterPro" id="IPR029054">
    <property type="entry name" value="dUTPase-like"/>
</dbReference>
<dbReference type="InterPro" id="IPR036157">
    <property type="entry name" value="dUTPase-like_sf"/>
</dbReference>
<dbReference type="InterPro" id="IPR033704">
    <property type="entry name" value="dUTPase_trimeric"/>
</dbReference>
<dbReference type="InterPro" id="IPR000467">
    <property type="entry name" value="G_patch_dom"/>
</dbReference>
<dbReference type="InterPro" id="IPR045345">
    <property type="entry name" value="Gag_p24_C"/>
</dbReference>
<dbReference type="InterPro" id="IPR017856">
    <property type="entry name" value="Integrase-like_N"/>
</dbReference>
<dbReference type="InterPro" id="IPR036862">
    <property type="entry name" value="Integrase_C_dom_sf_retrovir"/>
</dbReference>
<dbReference type="InterPro" id="IPR001037">
    <property type="entry name" value="Integrase_C_retrovir"/>
</dbReference>
<dbReference type="InterPro" id="IPR001584">
    <property type="entry name" value="Integrase_cat-core"/>
</dbReference>
<dbReference type="InterPro" id="IPR003308">
    <property type="entry name" value="Integrase_Zn-bd_dom_N"/>
</dbReference>
<dbReference type="InterPro" id="IPR001995">
    <property type="entry name" value="Peptidase_A2_cat"/>
</dbReference>
<dbReference type="InterPro" id="IPR021109">
    <property type="entry name" value="Peptidase_aspartic_dom_sf"/>
</dbReference>
<dbReference type="InterPro" id="IPR034170">
    <property type="entry name" value="Retropepsin-like_cat_dom"/>
</dbReference>
<dbReference type="InterPro" id="IPR018061">
    <property type="entry name" value="Retropepsins"/>
</dbReference>
<dbReference type="InterPro" id="IPR008916">
    <property type="entry name" value="Retrov_capsid_C"/>
</dbReference>
<dbReference type="InterPro" id="IPR008919">
    <property type="entry name" value="Retrov_capsid_N"/>
</dbReference>
<dbReference type="InterPro" id="IPR010999">
    <property type="entry name" value="Retrovr_matrix"/>
</dbReference>
<dbReference type="InterPro" id="IPR043128">
    <property type="entry name" value="Rev_trsase/Diguanyl_cyclase"/>
</dbReference>
<dbReference type="InterPro" id="IPR012337">
    <property type="entry name" value="RNaseH-like_sf"/>
</dbReference>
<dbReference type="InterPro" id="IPR002156">
    <property type="entry name" value="RNaseH_domain"/>
</dbReference>
<dbReference type="InterPro" id="IPR036397">
    <property type="entry name" value="RNaseH_sf"/>
</dbReference>
<dbReference type="InterPro" id="IPR000477">
    <property type="entry name" value="RT_dom"/>
</dbReference>
<dbReference type="InterPro" id="IPR010661">
    <property type="entry name" value="RVT_thumb"/>
</dbReference>
<dbReference type="InterPro" id="IPR001878">
    <property type="entry name" value="Znf_CCHC"/>
</dbReference>
<dbReference type="InterPro" id="IPR036875">
    <property type="entry name" value="Znf_CCHC_sf"/>
</dbReference>
<dbReference type="PANTHER" id="PTHR41694">
    <property type="entry name" value="ENDOGENOUS RETROVIRUS GROUP K MEMBER POL PROTEIN"/>
    <property type="match status" value="1"/>
</dbReference>
<dbReference type="PANTHER" id="PTHR41694:SF3">
    <property type="entry name" value="RNA-DIRECTED DNA POLYMERASE-RELATED"/>
    <property type="match status" value="1"/>
</dbReference>
<dbReference type="Pfam" id="PF00692">
    <property type="entry name" value="dUTPase"/>
    <property type="match status" value="1"/>
</dbReference>
<dbReference type="Pfam" id="PF01585">
    <property type="entry name" value="G-patch"/>
    <property type="match status" value="1"/>
</dbReference>
<dbReference type="Pfam" id="PF02337">
    <property type="entry name" value="Gag_p10"/>
    <property type="match status" value="1"/>
</dbReference>
<dbReference type="Pfam" id="PF00607">
    <property type="entry name" value="Gag_p24"/>
    <property type="match status" value="1"/>
</dbReference>
<dbReference type="Pfam" id="PF19317">
    <property type="entry name" value="Gag_p24_C"/>
    <property type="match status" value="1"/>
</dbReference>
<dbReference type="Pfam" id="PF00552">
    <property type="entry name" value="IN_DBD_C"/>
    <property type="match status" value="1"/>
</dbReference>
<dbReference type="Pfam" id="PF02022">
    <property type="entry name" value="Integrase_Zn"/>
    <property type="match status" value="1"/>
</dbReference>
<dbReference type="Pfam" id="PF00075">
    <property type="entry name" value="RNase_H"/>
    <property type="match status" value="1"/>
</dbReference>
<dbReference type="Pfam" id="PF00665">
    <property type="entry name" value="rve"/>
    <property type="match status" value="1"/>
</dbReference>
<dbReference type="Pfam" id="PF00077">
    <property type="entry name" value="RVP"/>
    <property type="match status" value="1"/>
</dbReference>
<dbReference type="Pfam" id="PF00078">
    <property type="entry name" value="RVT_1"/>
    <property type="match status" value="1"/>
</dbReference>
<dbReference type="Pfam" id="PF06817">
    <property type="entry name" value="RVT_thumb"/>
    <property type="match status" value="1"/>
</dbReference>
<dbReference type="Pfam" id="PF14787">
    <property type="entry name" value="zf-CCHC_5"/>
    <property type="match status" value="1"/>
</dbReference>
<dbReference type="SMART" id="SM00443">
    <property type="entry name" value="G_patch"/>
    <property type="match status" value="1"/>
</dbReference>
<dbReference type="SMART" id="SM00343">
    <property type="entry name" value="ZnF_C2HC"/>
    <property type="match status" value="2"/>
</dbReference>
<dbReference type="SUPFAM" id="SSF50630">
    <property type="entry name" value="Acid proteases"/>
    <property type="match status" value="1"/>
</dbReference>
<dbReference type="SUPFAM" id="SSF50122">
    <property type="entry name" value="DNA-binding domain of retroviral integrase"/>
    <property type="match status" value="1"/>
</dbReference>
<dbReference type="SUPFAM" id="SSF56672">
    <property type="entry name" value="DNA/RNA polymerases"/>
    <property type="match status" value="1"/>
</dbReference>
<dbReference type="SUPFAM" id="SSF51283">
    <property type="entry name" value="dUTPase-like"/>
    <property type="match status" value="1"/>
</dbReference>
<dbReference type="SUPFAM" id="SSF46919">
    <property type="entry name" value="N-terminal Zn binding domain of HIV integrase"/>
    <property type="match status" value="1"/>
</dbReference>
<dbReference type="SUPFAM" id="SSF47836">
    <property type="entry name" value="Retroviral matrix proteins"/>
    <property type="match status" value="1"/>
</dbReference>
<dbReference type="SUPFAM" id="SSF47353">
    <property type="entry name" value="Retrovirus capsid dimerization domain-like"/>
    <property type="match status" value="1"/>
</dbReference>
<dbReference type="SUPFAM" id="SSF47943">
    <property type="entry name" value="Retrovirus capsid protein, N-terminal core domain"/>
    <property type="match status" value="1"/>
</dbReference>
<dbReference type="SUPFAM" id="SSF57756">
    <property type="entry name" value="Retrovirus zinc finger-like domains"/>
    <property type="match status" value="1"/>
</dbReference>
<dbReference type="SUPFAM" id="SSF53098">
    <property type="entry name" value="Ribonuclease H-like"/>
    <property type="match status" value="1"/>
</dbReference>
<dbReference type="PROSITE" id="PS50175">
    <property type="entry name" value="ASP_PROT_RETROV"/>
    <property type="match status" value="1"/>
</dbReference>
<dbReference type="PROSITE" id="PS00141">
    <property type="entry name" value="ASP_PROTEASE"/>
    <property type="match status" value="1"/>
</dbReference>
<dbReference type="PROSITE" id="PS50174">
    <property type="entry name" value="G_PATCH"/>
    <property type="match status" value="1"/>
</dbReference>
<dbReference type="PROSITE" id="PS50994">
    <property type="entry name" value="INTEGRASE"/>
    <property type="match status" value="1"/>
</dbReference>
<dbReference type="PROSITE" id="PS51027">
    <property type="entry name" value="INTEGRASE_DBD"/>
    <property type="match status" value="1"/>
</dbReference>
<dbReference type="PROSITE" id="PS50879">
    <property type="entry name" value="RNASE_H_1"/>
    <property type="match status" value="1"/>
</dbReference>
<dbReference type="PROSITE" id="PS50878">
    <property type="entry name" value="RT_POL"/>
    <property type="match status" value="1"/>
</dbReference>
<dbReference type="PROSITE" id="PS50158">
    <property type="entry name" value="ZF_CCHC"/>
    <property type="match status" value="1"/>
</dbReference>
<dbReference type="PROSITE" id="PS50876">
    <property type="entry name" value="ZF_INTEGRASE"/>
    <property type="match status" value="1"/>
</dbReference>
<feature type="initiator methionine" description="Removed; by host" evidence="3">
    <location>
        <position position="1"/>
    </location>
</feature>
<feature type="chain" id="PRO_0000125498" description="Gag-Pro-Pol polyprotein">
    <location>
        <begin position="2"/>
        <end position="1772"/>
    </location>
</feature>
<feature type="chain" id="PRO_0000443157" description="Matrix protein p10">
    <location>
        <begin position="2"/>
        <end position="100"/>
    </location>
</feature>
<feature type="chain" id="PRO_0000443158" description="Phosphorylated protein pp24">
    <location>
        <begin position="101"/>
        <end position="217"/>
    </location>
</feature>
<feature type="propeptide" id="PRO_0000443159" evidence="18">
    <location>
        <begin position="101"/>
        <end position="162"/>
    </location>
</feature>
<feature type="chain" id="PRO_0000443160" description="Phosphorylated protein pp18">
    <location>
        <begin position="163"/>
        <end position="217"/>
    </location>
</feature>
<feature type="chain" id="PRO_0000443161" description="p12">
    <location>
        <begin position="218"/>
        <end position="300"/>
    </location>
</feature>
<feature type="chain" id="PRO_0000443162" description="Capsid protein p27">
    <location>
        <begin position="301"/>
        <end position="526"/>
    </location>
</feature>
<feature type="chain" id="PRO_0000443163" description="Nucleocapsid protein-dUTPase">
    <location>
        <begin position="527"/>
        <end position="760"/>
    </location>
</feature>
<feature type="chain" id="PRO_0000443164" description="Protease 17 kDa">
    <location>
        <begin position="761"/>
        <end position="912"/>
    </location>
</feature>
<feature type="chain" id="PRO_0000443165" description="Protease 13 kDa">
    <location>
        <begin position="761"/>
        <end position="874"/>
    </location>
</feature>
<feature type="peptide" id="PRO_0000443166" description="G-patch peptide">
    <location>
        <begin position="875"/>
        <end position="912"/>
    </location>
</feature>
<feature type="chain" id="PRO_0000443167" description="Reverse transcriptase/ribonuclease H">
    <location>
        <begin position="913"/>
        <end position="1497"/>
    </location>
</feature>
<feature type="chain" id="PRO_0000443168" description="Integrase">
    <location>
        <begin position="1498"/>
        <end position="1772"/>
    </location>
</feature>
<feature type="domain" description="Peptidase A2" evidence="11">
    <location>
        <begin position="781"/>
        <end position="857"/>
    </location>
</feature>
<feature type="domain" description="G-patch" evidence="10">
    <location>
        <begin position="868"/>
        <end position="914"/>
    </location>
</feature>
<feature type="domain" description="Reverse transcriptase" evidence="12">
    <location>
        <begin position="960"/>
        <end position="1148"/>
    </location>
</feature>
<feature type="domain" description="RNase H type-1" evidence="13">
    <location>
        <begin position="1362"/>
        <end position="1493"/>
    </location>
</feature>
<feature type="domain" description="Integrase catalytic" evidence="15">
    <location>
        <begin position="1551"/>
        <end position="1720"/>
    </location>
</feature>
<feature type="zinc finger region" description="CCHC-type" evidence="9">
    <location>
        <begin position="548"/>
        <end position="565"/>
    </location>
</feature>
<feature type="zinc finger region" description="Integrase-type" evidence="14">
    <location>
        <begin position="1497"/>
        <end position="1538"/>
    </location>
</feature>
<feature type="DNA-binding region" description="Integrase-type" evidence="16">
    <location>
        <begin position="1717"/>
        <end position="1766"/>
    </location>
</feature>
<feature type="region of interest" description="Disordered" evidence="17">
    <location>
        <begin position="113"/>
        <end position="149"/>
    </location>
</feature>
<feature type="region of interest" description="Disordered" evidence="17">
    <location>
        <begin position="258"/>
        <end position="282"/>
    </location>
</feature>
<feature type="region of interest" description="Disordered" evidence="17">
    <location>
        <begin position="593"/>
        <end position="626"/>
    </location>
</feature>
<feature type="coiled-coil region" evidence="8">
    <location>
        <begin position="217"/>
        <end position="258"/>
    </location>
</feature>
<feature type="short sequence motif" description="PPXY motif" evidence="5">
    <location>
        <begin position="203"/>
        <end position="206"/>
    </location>
</feature>
<feature type="short sequence motif" description="PTAP/PSAP motif" evidence="5">
    <location>
        <begin position="211"/>
        <end position="214"/>
    </location>
</feature>
<feature type="compositionally biased region" description="Polar residues" evidence="17">
    <location>
        <begin position="113"/>
        <end position="126"/>
    </location>
</feature>
<feature type="compositionally biased region" description="Basic and acidic residues" evidence="17">
    <location>
        <begin position="138"/>
        <end position="149"/>
    </location>
</feature>
<feature type="active site" description="Protease; shared with dimeric partner" evidence="11">
    <location>
        <position position="786"/>
    </location>
</feature>
<feature type="binding site" evidence="12">
    <location>
        <position position="1025"/>
    </location>
    <ligand>
        <name>Mg(2+)</name>
        <dbReference type="ChEBI" id="CHEBI:18420"/>
        <label>1</label>
        <note>catalytic; for reverse transcriptase activity</note>
    </ligand>
</feature>
<feature type="binding site" evidence="12">
    <location>
        <position position="1100"/>
    </location>
    <ligand>
        <name>Mg(2+)</name>
        <dbReference type="ChEBI" id="CHEBI:18420"/>
        <label>1</label>
        <note>catalytic; for reverse transcriptase activity</note>
    </ligand>
</feature>
<feature type="binding site" evidence="12">
    <location>
        <position position="1101"/>
    </location>
    <ligand>
        <name>Mg(2+)</name>
        <dbReference type="ChEBI" id="CHEBI:18420"/>
        <label>1</label>
        <note>catalytic; for reverse transcriptase activity</note>
    </ligand>
</feature>
<feature type="binding site" evidence="13">
    <location>
        <position position="1371"/>
    </location>
    <ligand>
        <name>Mg(2+)</name>
        <dbReference type="ChEBI" id="CHEBI:18420"/>
        <label>2</label>
        <note>for RNase H activity</note>
    </ligand>
</feature>
<feature type="binding site" evidence="13">
    <location>
        <position position="1400"/>
    </location>
    <ligand>
        <name>Mg(2+)</name>
        <dbReference type="ChEBI" id="CHEBI:18420"/>
        <label>2</label>
        <note>for RNase H activity</note>
    </ligand>
</feature>
<feature type="binding site" evidence="13">
    <location>
        <position position="1421"/>
    </location>
    <ligand>
        <name>Mg(2+)</name>
        <dbReference type="ChEBI" id="CHEBI:18420"/>
        <label>2</label>
        <note>for RNase H activity</note>
    </ligand>
</feature>
<feature type="binding site" evidence="13">
    <location>
        <position position="1485"/>
    </location>
    <ligand>
        <name>Mg(2+)</name>
        <dbReference type="ChEBI" id="CHEBI:18420"/>
        <label>2</label>
        <note>for RNase H activity</note>
    </ligand>
</feature>
<feature type="binding site" evidence="14">
    <location>
        <position position="1506"/>
    </location>
    <ligand>
        <name>Zn(2+)</name>
        <dbReference type="ChEBI" id="CHEBI:29105"/>
    </ligand>
</feature>
<feature type="binding site" evidence="14">
    <location>
        <position position="1510"/>
    </location>
    <ligand>
        <name>Zn(2+)</name>
        <dbReference type="ChEBI" id="CHEBI:29105"/>
    </ligand>
</feature>
<feature type="binding site" evidence="14">
    <location>
        <position position="1534"/>
    </location>
    <ligand>
        <name>Zn(2+)</name>
        <dbReference type="ChEBI" id="CHEBI:29105"/>
    </ligand>
</feature>
<feature type="binding site" evidence="14">
    <location>
        <position position="1537"/>
    </location>
    <ligand>
        <name>Zn(2+)</name>
        <dbReference type="ChEBI" id="CHEBI:29105"/>
    </ligand>
</feature>
<feature type="binding site" evidence="15">
    <location>
        <position position="1562"/>
    </location>
    <ligand>
        <name>Mg(2+)</name>
        <dbReference type="ChEBI" id="CHEBI:18420"/>
        <label>3</label>
        <note>catalytic; for integrase activity</note>
    </ligand>
</feature>
<feature type="binding site" evidence="15">
    <location>
        <position position="1619"/>
    </location>
    <ligand>
        <name>Mg(2+)</name>
        <dbReference type="ChEBI" id="CHEBI:18420"/>
        <label>3</label>
        <note>catalytic; for integrase activity</note>
    </ligand>
</feature>
<feature type="binding site" evidence="1">
    <location>
        <position position="1655"/>
    </location>
    <ligand>
        <name>Mg(2+)</name>
        <dbReference type="ChEBI" id="CHEBI:18420"/>
        <label>3</label>
        <note>catalytic; for integrase activity</note>
    </ligand>
</feature>
<feature type="site" description="Cleavage; by viral protease" evidence="3">
    <location>
        <begin position="100"/>
        <end position="101"/>
    </location>
</feature>
<feature type="site" description="Cleavage; by viral protease" evidence="3">
    <location>
        <begin position="162"/>
        <end position="163"/>
    </location>
</feature>
<feature type="site" description="Cleavage; by viral protease" evidence="3">
    <location>
        <begin position="217"/>
        <end position="218"/>
    </location>
</feature>
<feature type="site" description="Cleavage; by viral protease" evidence="3">
    <location>
        <begin position="300"/>
        <end position="301"/>
    </location>
</feature>
<feature type="site" description="Cleavage; by viral protease" evidence="3">
    <location>
        <begin position="526"/>
        <end position="527"/>
    </location>
</feature>
<feature type="site" description="Cleavage; by viral protease" evidence="5">
    <location>
        <begin position="760"/>
        <end position="761"/>
    </location>
</feature>
<feature type="site" description="Cleavage; by viral protease" evidence="5">
    <location>
        <begin position="874"/>
        <end position="875"/>
    </location>
</feature>
<feature type="site" description="Cleavage; by viral protease" evidence="5">
    <location>
        <begin position="912"/>
        <end position="913"/>
    </location>
</feature>
<feature type="site" description="Cleavage; by viral protease" evidence="2">
    <location>
        <begin position="1497"/>
        <end position="1498"/>
    </location>
</feature>
<feature type="lipid moiety-binding region" description="N-myristoyl glycine; by host" evidence="7">
    <location>
        <position position="2"/>
    </location>
</feature>
<organism>
    <name type="scientific">Simian retrovirus SRV-1</name>
    <dbReference type="NCBI Taxonomy" id="11942"/>
    <lineage>
        <taxon>Viruses</taxon>
        <taxon>Riboviria</taxon>
        <taxon>Pararnavirae</taxon>
        <taxon>Artverviricota</taxon>
        <taxon>Revtraviricetes</taxon>
        <taxon>Ortervirales</taxon>
        <taxon>Retroviridae</taxon>
        <taxon>Orthoretrovirinae</taxon>
        <taxon>Betaretrovirus</taxon>
        <taxon>Mason-Pfizer monkey virus</taxon>
    </lineage>
</organism>
<comment type="function">
    <molecule>Matrix protein p10</molecule>
    <text evidence="5">Matrix protein.</text>
</comment>
<comment type="function">
    <text evidence="5">Nucleocapsid protein p14: Nucleocapsid protein.</text>
</comment>
<comment type="function">
    <molecule>Capsid protein p27</molecule>
    <text evidence="5">Capsid protein.</text>
</comment>
<comment type="function">
    <molecule>Protease 17 kDa</molecule>
    <text evidence="11">The aspartyl protease mediates proteolytic cleavages of Gag and Gag-Pol polyproteins during or shortly after the release of the virion from the plasma membrane. Cleavages take place as an ordered, step-wise cascade to yield mature proteins. This process is called maturation. Displays maximal activity during the budding process just prior to particle release from the cell.</text>
</comment>
<comment type="function">
    <molecule>Protease 13 kDa</molecule>
    <text evidence="11">The aspartyl protease mediates proteolytic cleavages of Gag and Gag-Pol polyproteins during or shortly after the release of the virion from the plasma membrane. Cleavages take place as an ordered, step-wise cascade to yield mature proteins. This process is called maturation. Displays maximal activity during the budding process just prior to particle release from the cell.</text>
</comment>
<comment type="function">
    <molecule>G-patch peptide</molecule>
    <text evidence="5">Enhances the activity of the reverse transcriptase. May be part of the mature RT.</text>
</comment>
<comment type="function">
    <molecule>Reverse transcriptase/ribonuclease H</molecule>
    <text evidence="12">RT is a multifunctional enzyme that converts the viral dimeric RNA genome into dsDNA in the cytoplasm, shortly after virus entry into the cell. This enzyme displays a DNA polymerase activity that can copy either DNA or RNA templates, and a ribonuclease H (RNase H) activity that cleaves the RNA strand of RNA-DNA heteroduplexes in a partially processive 3' to 5' endonucleasic mode. Conversion of viral genomic RNA into dsDNA requires many steps. A tRNA binds to the primer-binding site (PBS) situated at the 5' end of the viral RNA. RT uses the 3' end of the tRNA primer to perfom a short round of RNA-dependent minus-strand DNA synthesis. The reading proceeds through the U5 region and ends after the repeated (R) region which is present at both ends of viral RNA. The portion of the RNA-DNA heteroduplex is digested by the RNase H, resulting in a ssDNA product attached to the tRNA primer. This ssDNA/tRNA hybridizes with the identical R region situated at the 3' end of viral RNA. This template exchange, known as minus-strand DNA strong stop transfer, can be either intra- or intermolecular. RT uses the 3' end of this newly synthesized short ssDNA to perfom the RNA-dependent minus-strand DNA synthesis of the whole template. RNase H digests the RNA template except for a polypurine tract (PPT) situated at the 5' end of the genome. It is not clear if both polymerase and RNase H activities are simultaneous. RNase H probably can proceed both in a polymerase-dependent (RNA cut into small fragments by the same RT performing DNA synthesis) and a polymerase-independent mode (cleavage of remaining RNA fragments by free RTs). Secondly, RT performs DNA-directed plus-strand DNA synthesis using the PPT that has not been removed by RNase H as primers. PPT and tRNA primers are then removed by RNase H. The 3' and 5' ssDNA PBS regions hybridize to form a circular dsDNA intermediate. Strand displacement synthesis by RT to the PBS and PPT ends produces a blunt ended, linear dsDNA copy of the viral genome that includes long terminal repeats (LTRs) at both ends.</text>
</comment>
<comment type="function">
    <molecule>Integrase</molecule>
    <text evidence="20">Catalyzes viral DNA integration into the host chromosome, by performing a series of DNA cutting and joining reactions.</text>
</comment>
<comment type="catalytic activity">
    <reaction evidence="12">
        <text>DNA(n) + a 2'-deoxyribonucleoside 5'-triphosphate = DNA(n+1) + diphosphate</text>
        <dbReference type="Rhea" id="RHEA:22508"/>
        <dbReference type="Rhea" id="RHEA-COMP:17339"/>
        <dbReference type="Rhea" id="RHEA-COMP:17340"/>
        <dbReference type="ChEBI" id="CHEBI:33019"/>
        <dbReference type="ChEBI" id="CHEBI:61560"/>
        <dbReference type="ChEBI" id="CHEBI:173112"/>
        <dbReference type="EC" id="2.7.7.49"/>
    </reaction>
</comment>
<comment type="catalytic activity">
    <reaction evidence="12">
        <text>DNA(n) + a 2'-deoxyribonucleoside 5'-triphosphate = DNA(n+1) + diphosphate</text>
        <dbReference type="Rhea" id="RHEA:22508"/>
        <dbReference type="Rhea" id="RHEA-COMP:17339"/>
        <dbReference type="Rhea" id="RHEA-COMP:17340"/>
        <dbReference type="ChEBI" id="CHEBI:33019"/>
        <dbReference type="ChEBI" id="CHEBI:61560"/>
        <dbReference type="ChEBI" id="CHEBI:173112"/>
        <dbReference type="EC" id="2.7.7.7"/>
    </reaction>
</comment>
<comment type="catalytic activity">
    <reaction evidence="13">
        <text>Endonucleolytic cleavage to 5'-phosphomonoester.</text>
        <dbReference type="EC" id="3.1.26.4"/>
    </reaction>
</comment>
<comment type="catalytic activity">
    <reaction evidence="4">
        <text>dUTP + H2O = dUMP + diphosphate + H(+)</text>
        <dbReference type="Rhea" id="RHEA:10248"/>
        <dbReference type="ChEBI" id="CHEBI:15377"/>
        <dbReference type="ChEBI" id="CHEBI:15378"/>
        <dbReference type="ChEBI" id="CHEBI:33019"/>
        <dbReference type="ChEBI" id="CHEBI:61555"/>
        <dbReference type="ChEBI" id="CHEBI:246422"/>
        <dbReference type="EC" id="3.6.1.23"/>
    </reaction>
</comment>
<comment type="cofactor">
    <cofactor evidence="12">
        <name>Mg(2+)</name>
        <dbReference type="ChEBI" id="CHEBI:18420"/>
    </cofactor>
    <text evidence="12">The RT polymerase active site binds 2 magnesium ions.</text>
</comment>
<comment type="subunit">
    <molecule>Protease 17 kDa</molecule>
    <text evidence="18">Homodimer.</text>
</comment>
<comment type="subunit">
    <molecule>Reverse transcriptase/ribonuclease H</molecule>
    <text evidence="4">Interacts with the G-patch peptide.</text>
</comment>
<comment type="subunit">
    <molecule>G-patch peptide</molecule>
    <text evidence="4">Interacts with the reverse transcriptase/ribonuclease H.</text>
</comment>
<comment type="subunit">
    <molecule>Nucleocapsid protein-dUTPase</molecule>
    <text evidence="4">Homotrimer.</text>
</comment>
<comment type="subcellular location">
    <molecule>Matrix protein p10</molecule>
    <subcellularLocation>
        <location evidence="18">Virion</location>
    </subcellularLocation>
</comment>
<comment type="subcellular location">
    <molecule>Capsid protein p27</molecule>
    <subcellularLocation>
        <location evidence="18">Virion</location>
    </subcellularLocation>
</comment>
<comment type="subcellular location">
    <molecule>Nucleocapsid protein-dUTPase</molecule>
    <subcellularLocation>
        <location evidence="18">Virion</location>
    </subcellularLocation>
</comment>
<comment type="subcellular location">
    <molecule>Protease 13 kDa</molecule>
    <subcellularLocation>
        <location evidence="5">Virion</location>
    </subcellularLocation>
</comment>
<comment type="subcellular location">
    <molecule>Protease 17 kDa</molecule>
    <subcellularLocation>
        <location evidence="5">Virion</location>
    </subcellularLocation>
</comment>
<comment type="alternative products">
    <event type="ribosomal frameshifting"/>
    <isoform>
        <id>P04025-1</id>
        <name>Gag-Pro-Pol polyprotein</name>
        <sequence type="displayed"/>
    </isoform>
    <isoform>
        <id>P04024-1</id>
        <name>Gag-Pro polyprotein</name>
        <sequence type="external"/>
    </isoform>
    <isoform>
        <id>P04022-1</id>
        <name>Gag polyprotein</name>
        <sequence type="external"/>
    </isoform>
</comment>
<comment type="domain">
    <molecule>Gag-Pro-Pol polyprotein</molecule>
    <text evidence="5">Late-budding domains (L domains) are short sequence motifs essential for viral particle release. They can occur individually or in close proximity within structural proteins. They interacts with sorting cellular proteins of the multivesicular body (MVB) pathway. Most of these proteins are class E vacuolar protein sorting factors belonging to ESCRT-I, ESCRT-II or ESCRT-III complexes. Phosphorylated protein pp24 and phosphorylated protein pp18 contains two L domains: a PTAP/PSAP motif which interacts with the UEV domain of TSG101, and a PPXY motif which binds to the WW domains of the ubiquitin ligase NEDD4. Both motifs contribute to viral release. The PSAP motif acts as an additional L domain and promotes the efficient release of the virions but requires an intact PPPY motif to perform its function.</text>
</comment>
<comment type="domain">
    <molecule>Protease 17 kDa</molecule>
    <text evidence="5">The glycine-rich G-patch domain (GPD) is present at the C-terminus of the protease from which it is then detached by the protease itself.</text>
</comment>
<comment type="PTM">
    <molecule>Protease 17 kDa</molecule>
    <text evidence="5">Released by autocatalytic processing. The protease can undergo further autoprocessing to yield 2 shorter but enzymatically active forms of 12 kDa and 13 kDa.</text>
</comment>
<comment type="PTM">
    <molecule>Gag-Pro-Pol polyprotein</molecule>
    <text evidence="6">Myristoylated. Myristoylation of the matrix (MA) domain mediates the transport and binding of Gag polyproteins to the host plasma membrane and is required for the assembly of viral particles.</text>
</comment>
<comment type="PTM">
    <molecule>Gag-Pro-Pol polyprotein</molecule>
    <text evidence="5">Specific enzymatic cleavages in vivo yield mature proteins.</text>
</comment>
<comment type="miscellaneous">
    <molecule>Reverse transcriptase/ribonuclease H</molecule>
    <text evidence="12">The reverse transcriptase is an error-prone enzyme that lacks a proof-reading function. High mutations rate is a direct consequence of this characteristic. RT also displays frequent template switching leading to high recombination rate. Recombination mostly occurs between homologous regions of the two copackaged RNA genomes. If these two RNA molecules derive from different viral strains, reverse transcription will give rise to highly recombinated proviral DNAs.</text>
</comment>
<comment type="miscellaneous">
    <molecule>Isoform Gag-Pro-Pol polyprotein</molecule>
    <text evidence="19">Produced by -1 ribosomal frameshiftings between gag-pro and pro-pol.</text>
</comment>
<comment type="similarity">
    <text evidence="18">Belongs to the retroviral Pol polyprotein family.</text>
</comment>
<evidence type="ECO:0000250" key="1">
    <source>
        <dbReference type="UniProtKB" id="P03354"/>
    </source>
</evidence>
<evidence type="ECO:0000250" key="2">
    <source>
        <dbReference type="UniProtKB" id="P03365"/>
    </source>
</evidence>
<evidence type="ECO:0000250" key="3">
    <source>
        <dbReference type="UniProtKB" id="P07567"/>
    </source>
</evidence>
<evidence type="ECO:0000250" key="4">
    <source>
        <dbReference type="UniProtKB" id="P07570"/>
    </source>
</evidence>
<evidence type="ECO:0000250" key="5">
    <source>
        <dbReference type="UniProtKB" id="P07572"/>
    </source>
</evidence>
<evidence type="ECO:0000250" key="6">
    <source>
        <dbReference type="UniProtKB" id="P10258"/>
    </source>
</evidence>
<evidence type="ECO:0000250" key="7">
    <source>
        <dbReference type="UniProtKB" id="P11283"/>
    </source>
</evidence>
<evidence type="ECO:0000255" key="8"/>
<evidence type="ECO:0000255" key="9">
    <source>
        <dbReference type="PROSITE-ProRule" id="PRU00047"/>
    </source>
</evidence>
<evidence type="ECO:0000255" key="10">
    <source>
        <dbReference type="PROSITE-ProRule" id="PRU00092"/>
    </source>
</evidence>
<evidence type="ECO:0000255" key="11">
    <source>
        <dbReference type="PROSITE-ProRule" id="PRU00275"/>
    </source>
</evidence>
<evidence type="ECO:0000255" key="12">
    <source>
        <dbReference type="PROSITE-ProRule" id="PRU00405"/>
    </source>
</evidence>
<evidence type="ECO:0000255" key="13">
    <source>
        <dbReference type="PROSITE-ProRule" id="PRU00408"/>
    </source>
</evidence>
<evidence type="ECO:0000255" key="14">
    <source>
        <dbReference type="PROSITE-ProRule" id="PRU00450"/>
    </source>
</evidence>
<evidence type="ECO:0000255" key="15">
    <source>
        <dbReference type="PROSITE-ProRule" id="PRU00457"/>
    </source>
</evidence>
<evidence type="ECO:0000255" key="16">
    <source>
        <dbReference type="PROSITE-ProRule" id="PRU00506"/>
    </source>
</evidence>
<evidence type="ECO:0000256" key="17">
    <source>
        <dbReference type="SAM" id="MobiDB-lite"/>
    </source>
</evidence>
<evidence type="ECO:0000305" key="18"/>
<evidence type="ECO:0000305" key="19">
    <source>
    </source>
</evidence>
<evidence type="ECO:0000305" key="20">
    <source>
    </source>
</evidence>
<gene>
    <name type="primary">pol</name>
</gene>
<proteinExistence type="inferred from homology"/>
<name>POL_SRV1</name>
<accession>P04025</accession>
<protein>
    <recommendedName>
        <fullName>Gag-Pro-Pol polyprotein</fullName>
    </recommendedName>
    <component>
        <recommendedName>
            <fullName>Matrix protein p10</fullName>
        </recommendedName>
    </component>
    <component>
        <recommendedName>
            <fullName>Phosphorylated protein pp24</fullName>
        </recommendedName>
    </component>
    <component>
        <recommendedName>
            <fullName>Phosphorylated protein pp18</fullName>
        </recommendedName>
    </component>
    <component>
        <recommendedName>
            <fullName>p12</fullName>
        </recommendedName>
    </component>
    <component>
        <recommendedName>
            <fullName>Capsid protein p27</fullName>
        </recommendedName>
    </component>
    <component>
        <recommendedName>
            <fullName>Nucleocapsid protein-dUTPase</fullName>
            <shortName>NC-dUTPase</shortName>
            <ecNumber evidence="7">3.6.1.23</ecNumber>
        </recommendedName>
    </component>
    <component>
        <recommendedName>
            <fullName evidence="5">Protease 17 kDa</fullName>
            <ecNumber evidence="11">3.4.23.-</ecNumber>
        </recommendedName>
    </component>
    <component>
        <recommendedName>
            <fullName evidence="5">Protease 13 kDa</fullName>
            <ecNumber evidence="11">3.4.23.-</ecNumber>
        </recommendedName>
    </component>
    <component>
        <recommendedName>
            <fullName evidence="5">G-patch peptide</fullName>
        </recommendedName>
    </component>
    <component>
        <recommendedName>
            <fullName>Reverse transcriptase/ribonuclease H</fullName>
            <shortName>RT</shortName>
            <ecNumber evidence="12">2.7.7.49</ecNumber>
            <ecNumber evidence="12">2.7.7.7</ecNumber>
            <ecNumber evidence="13">3.1.26.4</ecNumber>
        </recommendedName>
    </component>
    <component>
        <recommendedName>
            <fullName>Integrase</fullName>
            <shortName>IN</shortName>
            <ecNumber evidence="7">2.7.7.-</ecNumber>
            <ecNumber evidence="7">3.1.-.-</ecNumber>
        </recommendedName>
    </component>
</protein>
<reference key="1">
    <citation type="journal article" date="1986" name="Science">
        <title>Nucleotide sequence of SRV-1, a type D simian acquired immune deficiency syndrome retrovirus.</title>
        <authorList>
            <person name="Power M.D."/>
            <person name="Marx P.A."/>
            <person name="Bryant M.L."/>
            <person name="Gardner M.B."/>
            <person name="Barr P.J."/>
            <person name="Luciw P.A."/>
        </authorList>
    </citation>
    <scope>NUCLEOTIDE SEQUENCE [GENOMIC RNA]</scope>
</reference>
<reference key="2">
    <citation type="journal article" date="2013" name="Biomed. Res. Int.">
        <title>A genome-wide analysis of RNA pseudoknots that stimulate efficient -1 ribosomal frameshifting or readthrough in animal viruses.</title>
        <authorList>
            <person name="Huang X."/>
            <person name="Cheng Q."/>
            <person name="Du Z."/>
        </authorList>
    </citation>
    <scope>RIBOSOMAL FRAMESHIFT</scope>
</reference>
<reference key="3">
    <citation type="journal article" date="2017" name="Curr. Opin. Struct. Biol.">
        <title>Retroviral intasomes arising.</title>
        <authorList>
            <person name="Engelman A.N."/>
            <person name="Cherepanov P."/>
        </authorList>
    </citation>
    <scope>REVIEW (INTEGRASE)</scope>
</reference>